<accession>Q5UR34</accession>
<organismHost>
    <name type="scientific">Acanthamoeba polyphaga</name>
    <name type="common">Amoeba</name>
    <dbReference type="NCBI Taxonomy" id="5757"/>
</organismHost>
<dbReference type="EMBL" id="AY653733">
    <property type="protein sequence ID" value="AAV50818.1"/>
    <property type="molecule type" value="Genomic_DNA"/>
</dbReference>
<dbReference type="SMR" id="Q5UR34"/>
<dbReference type="KEGG" id="vg:9925189"/>
<dbReference type="Proteomes" id="UP000001134">
    <property type="component" value="Genome"/>
</dbReference>
<organism>
    <name type="scientific">Acanthamoeba polyphaga mimivirus</name>
    <name type="common">APMV</name>
    <dbReference type="NCBI Taxonomy" id="212035"/>
    <lineage>
        <taxon>Viruses</taxon>
        <taxon>Varidnaviria</taxon>
        <taxon>Bamfordvirae</taxon>
        <taxon>Nucleocytoviricota</taxon>
        <taxon>Megaviricetes</taxon>
        <taxon>Imitervirales</taxon>
        <taxon>Mimiviridae</taxon>
        <taxon>Megamimivirinae</taxon>
        <taxon>Mimivirus</taxon>
        <taxon>Mimivirus bradfordmassiliense</taxon>
    </lineage>
</organism>
<gene>
    <name type="ordered locus">MIMI_R554</name>
</gene>
<sequence length="406" mass="45755">MGNTTSEIQTQNVEAQPLISTEEQLSVDNPSIQSDQSVDTVENTVNDTVNDTVENTVNDTVQSIINKKYVHPVIDLINSNQSENEIIEVLKSFVGTNVVGTNENGQTIYDCVDQVELFGPAMQVFCHCACYGKKDVTDWILKNYVPLQVSYGDNFTFFETQKYKHFDISDMLVKHESFVPSYEVMQNLLSRSKYDLLEHCLNNPNLEKSHIDHYNLFIQYLSNKQYSNINELLVSLKKDSNTPIVSGNESETQPLQVTEIVNVNDNVTLDEISYSEIVTDTLPQNVESGIQLESTTEVKPESTTEVKPESTSEVQPESTTEFQPESTTVVEPESTTKVEPESTTEFQPESTTEVEPESTTEPQVESTTEFQPESSTEPQVESTVEVQAESMNESSYFQYNKPTYDI</sequence>
<name>YR554_MIMIV</name>
<evidence type="ECO:0000255" key="1"/>
<evidence type="ECO:0000256" key="2">
    <source>
        <dbReference type="SAM" id="MobiDB-lite"/>
    </source>
</evidence>
<protein>
    <recommendedName>
        <fullName>Uncharacterized protein R554</fullName>
    </recommendedName>
</protein>
<reference key="1">
    <citation type="journal article" date="2004" name="Science">
        <title>The 1.2-megabase genome sequence of Mimivirus.</title>
        <authorList>
            <person name="Raoult D."/>
            <person name="Audic S."/>
            <person name="Robert C."/>
            <person name="Abergel C."/>
            <person name="Renesto P."/>
            <person name="Ogata H."/>
            <person name="La Scola B."/>
            <person name="Susan M."/>
            <person name="Claverie J.-M."/>
        </authorList>
    </citation>
    <scope>NUCLEOTIDE SEQUENCE [LARGE SCALE GENOMIC DNA]</scope>
    <source>
        <strain>Rowbotham-Bradford</strain>
    </source>
</reference>
<keyword id="KW-0449">Lipoprotein</keyword>
<keyword id="KW-0519">Myristate</keyword>
<keyword id="KW-1185">Reference proteome</keyword>
<proteinExistence type="inferred from homology"/>
<feature type="initiator methionine" description="Removed" evidence="1">
    <location>
        <position position="1"/>
    </location>
</feature>
<feature type="chain" id="PRO_0000253444" description="Uncharacterized protein R554">
    <location>
        <begin position="2"/>
        <end position="406"/>
    </location>
</feature>
<feature type="region of interest" description="Disordered" evidence="2">
    <location>
        <begin position="291"/>
        <end position="406"/>
    </location>
</feature>
<feature type="compositionally biased region" description="Basic and acidic residues" evidence="2">
    <location>
        <begin position="296"/>
        <end position="310"/>
    </location>
</feature>
<feature type="compositionally biased region" description="Polar residues" evidence="2">
    <location>
        <begin position="311"/>
        <end position="323"/>
    </location>
</feature>
<feature type="compositionally biased region" description="Low complexity" evidence="2">
    <location>
        <begin position="324"/>
        <end position="333"/>
    </location>
</feature>
<feature type="compositionally biased region" description="Low complexity" evidence="2">
    <location>
        <begin position="341"/>
        <end position="351"/>
    </location>
</feature>
<feature type="compositionally biased region" description="Low complexity" evidence="2">
    <location>
        <begin position="359"/>
        <end position="369"/>
    </location>
</feature>
<feature type="compositionally biased region" description="Polar residues" evidence="2">
    <location>
        <begin position="370"/>
        <end position="406"/>
    </location>
</feature>
<feature type="lipid moiety-binding region" description="N-myristoyl glycine; by host" evidence="1">
    <location>
        <position position="2"/>
    </location>
</feature>